<dbReference type="EMBL" id="BX950229">
    <property type="protein sequence ID" value="CAF29999.1"/>
    <property type="molecule type" value="Genomic_DNA"/>
</dbReference>
<dbReference type="RefSeq" id="WP_011170387.1">
    <property type="nucleotide sequence ID" value="NC_005791.1"/>
</dbReference>
<dbReference type="PDB" id="1YWX">
    <property type="method" value="NMR"/>
    <property type="chains" value="A=1-102"/>
</dbReference>
<dbReference type="PDBsum" id="1YWX"/>
<dbReference type="BMRB" id="P61193"/>
<dbReference type="SMR" id="P61193"/>
<dbReference type="STRING" id="267377.MMP0443"/>
<dbReference type="EnsemblBacteria" id="CAF29999">
    <property type="protein sequence ID" value="CAF29999"/>
    <property type="gene ID" value="MMP0443"/>
</dbReference>
<dbReference type="KEGG" id="mmp:MMP0443"/>
<dbReference type="PATRIC" id="fig|267377.15.peg.447"/>
<dbReference type="eggNOG" id="arCOG04182">
    <property type="taxonomic scope" value="Archaea"/>
</dbReference>
<dbReference type="HOGENOM" id="CLU_107248_3_1_2"/>
<dbReference type="OrthoDB" id="27533at2157"/>
<dbReference type="EvolutionaryTrace" id="P61193"/>
<dbReference type="Proteomes" id="UP000000590">
    <property type="component" value="Chromosome"/>
</dbReference>
<dbReference type="GO" id="GO:1990904">
    <property type="term" value="C:ribonucleoprotein complex"/>
    <property type="evidence" value="ECO:0007669"/>
    <property type="project" value="UniProtKB-KW"/>
</dbReference>
<dbReference type="GO" id="GO:0005840">
    <property type="term" value="C:ribosome"/>
    <property type="evidence" value="ECO:0007669"/>
    <property type="project" value="UniProtKB-KW"/>
</dbReference>
<dbReference type="GO" id="GO:0003735">
    <property type="term" value="F:structural constituent of ribosome"/>
    <property type="evidence" value="ECO:0007669"/>
    <property type="project" value="InterPro"/>
</dbReference>
<dbReference type="GO" id="GO:0006412">
    <property type="term" value="P:translation"/>
    <property type="evidence" value="ECO:0007669"/>
    <property type="project" value="UniProtKB-UniRule"/>
</dbReference>
<dbReference type="Gene3D" id="3.30.70.330">
    <property type="match status" value="1"/>
</dbReference>
<dbReference type="HAMAP" id="MF_00545">
    <property type="entry name" value="Ribosomal_eS24"/>
    <property type="match status" value="1"/>
</dbReference>
<dbReference type="InterPro" id="IPR012677">
    <property type="entry name" value="Nucleotide-bd_a/b_plait_sf"/>
</dbReference>
<dbReference type="InterPro" id="IPR001976">
    <property type="entry name" value="Ribosomal_eS24"/>
</dbReference>
<dbReference type="InterPro" id="IPR018098">
    <property type="entry name" value="Ribosomal_eS24_CS"/>
</dbReference>
<dbReference type="InterPro" id="IPR012678">
    <property type="entry name" value="Ribosomal_uL23/eL15/eS24_sf"/>
</dbReference>
<dbReference type="Pfam" id="PF01282">
    <property type="entry name" value="Ribosomal_S24e"/>
    <property type="match status" value="1"/>
</dbReference>
<dbReference type="SUPFAM" id="SSF54189">
    <property type="entry name" value="Ribosomal proteins S24e, L23 and L15e"/>
    <property type="match status" value="1"/>
</dbReference>
<dbReference type="PROSITE" id="PS00529">
    <property type="entry name" value="RIBOSOMAL_S24E"/>
    <property type="match status" value="1"/>
</dbReference>
<gene>
    <name evidence="1" type="primary">rps24e</name>
    <name type="ordered locus">MMP0443</name>
</gene>
<feature type="chain" id="PRO_0000137646" description="Small ribosomal subunit protein eS24">
    <location>
        <begin position="1"/>
        <end position="102"/>
    </location>
</feature>
<feature type="strand" evidence="3">
    <location>
        <begin position="2"/>
        <end position="11"/>
    </location>
</feature>
<feature type="turn" evidence="3">
    <location>
        <begin position="12"/>
        <end position="15"/>
    </location>
</feature>
<feature type="strand" evidence="3">
    <location>
        <begin position="16"/>
        <end position="24"/>
    </location>
</feature>
<feature type="helix" evidence="3">
    <location>
        <begin position="32"/>
        <end position="43"/>
    </location>
</feature>
<feature type="strand" evidence="3">
    <location>
        <begin position="50"/>
        <end position="57"/>
    </location>
</feature>
<feature type="strand" evidence="3">
    <location>
        <begin position="59"/>
        <end position="70"/>
    </location>
</feature>
<feature type="helix" evidence="3">
    <location>
        <begin position="74"/>
        <end position="79"/>
    </location>
</feature>
<feature type="helix" evidence="3">
    <location>
        <begin position="83"/>
        <end position="88"/>
    </location>
</feature>
<reference key="1">
    <citation type="journal article" date="2004" name="J. Bacteriol.">
        <title>Complete genome sequence of the genetically tractable hydrogenotrophic methanogen Methanococcus maripaludis.</title>
        <authorList>
            <person name="Hendrickson E.L."/>
            <person name="Kaul R."/>
            <person name="Zhou Y."/>
            <person name="Bovee D."/>
            <person name="Chapman P."/>
            <person name="Chung J."/>
            <person name="Conway de Macario E."/>
            <person name="Dodsworth J.A."/>
            <person name="Gillett W."/>
            <person name="Graham D.E."/>
            <person name="Hackett M."/>
            <person name="Haydock A.K."/>
            <person name="Kang A."/>
            <person name="Land M.L."/>
            <person name="Levy R."/>
            <person name="Lie T.J."/>
            <person name="Major T.A."/>
            <person name="Moore B.C."/>
            <person name="Porat I."/>
            <person name="Palmeiri A."/>
            <person name="Rouse G."/>
            <person name="Saenphimmachak C."/>
            <person name="Soell D."/>
            <person name="Van Dien S."/>
            <person name="Wang T."/>
            <person name="Whitman W.B."/>
            <person name="Xia Q."/>
            <person name="Zhang Y."/>
            <person name="Larimer F.W."/>
            <person name="Olson M.V."/>
            <person name="Leigh J.A."/>
        </authorList>
    </citation>
    <scope>NUCLEOTIDE SEQUENCE [LARGE SCALE GENOMIC DNA]</scope>
    <source>
        <strain>DSM 14266 / JCM 13030 / NBRC 101832 / S2 / LL</strain>
    </source>
</reference>
<protein>
    <recommendedName>
        <fullName evidence="1">Small ribosomal subunit protein eS24</fullName>
    </recommendedName>
    <alternativeName>
        <fullName evidence="2">30S ribosomal protein S24e</fullName>
    </alternativeName>
</protein>
<comment type="similarity">
    <text evidence="1">Belongs to the eukaryotic ribosomal protein eS24 family.</text>
</comment>
<evidence type="ECO:0000255" key="1">
    <source>
        <dbReference type="HAMAP-Rule" id="MF_00545"/>
    </source>
</evidence>
<evidence type="ECO:0000305" key="2"/>
<evidence type="ECO:0007829" key="3">
    <source>
        <dbReference type="PDB" id="1YWX"/>
    </source>
</evidence>
<proteinExistence type="evidence at protein level"/>
<accession>P61193</accession>
<name>RS24_METMP</name>
<keyword id="KW-0002">3D-structure</keyword>
<keyword id="KW-1185">Reference proteome</keyword>
<keyword id="KW-0687">Ribonucleoprotein</keyword>
<keyword id="KW-0689">Ribosomal protein</keyword>
<organism>
    <name type="scientific">Methanococcus maripaludis (strain DSM 14266 / JCM 13030 / NBRC 101832 / S2 / LL)</name>
    <dbReference type="NCBI Taxonomy" id="267377"/>
    <lineage>
        <taxon>Archaea</taxon>
        <taxon>Methanobacteriati</taxon>
        <taxon>Methanobacteriota</taxon>
        <taxon>Methanomada group</taxon>
        <taxon>Methanococci</taxon>
        <taxon>Methanococcales</taxon>
        <taxon>Methanococcaceae</taxon>
        <taxon>Methanococcus</taxon>
    </lineage>
</organism>
<sequence length="102" mass="11458">MDISIISDRNNPLLQRREIKFTVSFDAATPSIKDVKMKLVAVLNANKQVLVVDTLDQIFGKLEAEGYAKIYNDEKAMATIETKSVLEKNKIEEEAEAEVAEE</sequence>